<accession>P43510</accession>
<feature type="signal peptide" evidence="2">
    <location>
        <begin position="1"/>
        <end position="16"/>
    </location>
</feature>
<feature type="propeptide" id="PRO_0000026198" evidence="2">
    <location>
        <begin position="17"/>
        <end position="104"/>
    </location>
</feature>
<feature type="chain" id="PRO_0000026199" description="Cathepsin B-like cysteine proteinase 6">
    <location>
        <begin position="105"/>
        <end position="379"/>
    </location>
</feature>
<feature type="active site" evidence="1">
    <location>
        <position position="133"/>
    </location>
</feature>
<feature type="active site" evidence="1">
    <location>
        <position position="305"/>
    </location>
</feature>
<feature type="active site" evidence="1">
    <location>
        <position position="325"/>
    </location>
</feature>
<feature type="glycosylation site" description="N-linked (GlcNAc...) asparagine" evidence="6 7 8">
    <location>
        <position position="196"/>
    </location>
</feature>
<feature type="glycosylation site" description="N-linked (GlcNAc...) asparagine; atypical" evidence="7 8">
    <location>
        <position position="201"/>
    </location>
</feature>
<feature type="disulfide bond" evidence="1">
    <location>
        <begin position="118"/>
        <end position="147"/>
    </location>
</feature>
<feature type="disulfide bond" evidence="1">
    <location>
        <begin position="130"/>
        <end position="174"/>
    </location>
</feature>
<feature type="disulfide bond" evidence="1">
    <location>
        <begin position="166"/>
        <end position="233"/>
    </location>
</feature>
<feature type="disulfide bond" evidence="1">
    <location>
        <begin position="167"/>
        <end position="170"/>
    </location>
</feature>
<feature type="disulfide bond" evidence="1">
    <location>
        <begin position="203"/>
        <end position="237"/>
    </location>
</feature>
<feature type="disulfide bond" evidence="1">
    <location>
        <begin position="211"/>
        <end position="223"/>
    </location>
</feature>
<dbReference type="EC" id="3.4.22.-"/>
<dbReference type="EMBL" id="L39894">
    <property type="protein sequence ID" value="AAA98787.1"/>
    <property type="molecule type" value="mRNA"/>
</dbReference>
<dbReference type="EMBL" id="L39939">
    <property type="protein sequence ID" value="AAA98789.1"/>
    <property type="molecule type" value="Genomic_DNA"/>
</dbReference>
<dbReference type="EMBL" id="FO080666">
    <property type="protein sequence ID" value="CCD65628.1"/>
    <property type="molecule type" value="Genomic_DNA"/>
</dbReference>
<dbReference type="PIR" id="T37274">
    <property type="entry name" value="T37274"/>
</dbReference>
<dbReference type="RefSeq" id="NP_741818.1">
    <property type="nucleotide sequence ID" value="NM_171708.8"/>
</dbReference>
<dbReference type="SMR" id="P43510"/>
<dbReference type="BioGRID" id="45860">
    <property type="interactions" value="7"/>
</dbReference>
<dbReference type="DIP" id="DIP-25139N"/>
<dbReference type="FunCoup" id="P43510">
    <property type="interactions" value="1437"/>
</dbReference>
<dbReference type="IntAct" id="P43510">
    <property type="interactions" value="1"/>
</dbReference>
<dbReference type="STRING" id="6239.C25B8.3a.1"/>
<dbReference type="MEROPS" id="C01.A51"/>
<dbReference type="GlyCosmos" id="P43510">
    <property type="glycosylation" value="2 sites, No reported glycans"/>
</dbReference>
<dbReference type="iPTMnet" id="P43510"/>
<dbReference type="PaxDb" id="6239-C25B8.3a"/>
<dbReference type="PeptideAtlas" id="P43510"/>
<dbReference type="EnsemblMetazoa" id="C25B8.3.1">
    <property type="protein sequence ID" value="C25B8.3.1"/>
    <property type="gene ID" value="WBGene00000786"/>
</dbReference>
<dbReference type="GeneID" id="180931"/>
<dbReference type="KEGG" id="cel:CELE_C25B8.3"/>
<dbReference type="UCSC" id="C25B8.3a">
    <property type="organism name" value="c. elegans"/>
</dbReference>
<dbReference type="AGR" id="WB:WBGene00000786"/>
<dbReference type="CTD" id="180931"/>
<dbReference type="WormBase" id="C25B8.3">
    <property type="protein sequence ID" value="CE04078"/>
    <property type="gene ID" value="WBGene00000786"/>
    <property type="gene designation" value="cpr-6"/>
</dbReference>
<dbReference type="eggNOG" id="KOG1543">
    <property type="taxonomic scope" value="Eukaryota"/>
</dbReference>
<dbReference type="InParanoid" id="P43510"/>
<dbReference type="OMA" id="DEKIPYW"/>
<dbReference type="OrthoDB" id="640249at2759"/>
<dbReference type="PhylomeDB" id="P43510"/>
<dbReference type="BRENDA" id="3.4.22.B6">
    <property type="organism ID" value="1045"/>
</dbReference>
<dbReference type="PRO" id="PR:P43510"/>
<dbReference type="Proteomes" id="UP000001940">
    <property type="component" value="Chromosome X"/>
</dbReference>
<dbReference type="Bgee" id="WBGene00000786">
    <property type="expression patterns" value="Expressed in adult organism and 4 other cell types or tissues"/>
</dbReference>
<dbReference type="GO" id="GO:0005615">
    <property type="term" value="C:extracellular space"/>
    <property type="evidence" value="ECO:0000318"/>
    <property type="project" value="GO_Central"/>
</dbReference>
<dbReference type="GO" id="GO:0005764">
    <property type="term" value="C:lysosome"/>
    <property type="evidence" value="ECO:0000314"/>
    <property type="project" value="WormBase"/>
</dbReference>
<dbReference type="GO" id="GO:0004197">
    <property type="term" value="F:cysteine-type endopeptidase activity"/>
    <property type="evidence" value="ECO:0000318"/>
    <property type="project" value="GO_Central"/>
</dbReference>
<dbReference type="GO" id="GO:0051603">
    <property type="term" value="P:proteolysis involved in protein catabolic process"/>
    <property type="evidence" value="ECO:0000318"/>
    <property type="project" value="GO_Central"/>
</dbReference>
<dbReference type="CDD" id="cd02620">
    <property type="entry name" value="Peptidase_C1A_CathepsinB"/>
    <property type="match status" value="1"/>
</dbReference>
<dbReference type="FunFam" id="3.90.70.10:FF:000031">
    <property type="entry name" value="Cathepsin B"/>
    <property type="match status" value="1"/>
</dbReference>
<dbReference type="Gene3D" id="3.90.70.10">
    <property type="entry name" value="Cysteine proteinases"/>
    <property type="match status" value="1"/>
</dbReference>
<dbReference type="InterPro" id="IPR038765">
    <property type="entry name" value="Papain-like_cys_pep_sf"/>
</dbReference>
<dbReference type="InterPro" id="IPR025661">
    <property type="entry name" value="Pept_asp_AS"/>
</dbReference>
<dbReference type="InterPro" id="IPR000169">
    <property type="entry name" value="Pept_cys_AS"/>
</dbReference>
<dbReference type="InterPro" id="IPR025660">
    <property type="entry name" value="Pept_his_AS"/>
</dbReference>
<dbReference type="InterPro" id="IPR013128">
    <property type="entry name" value="Peptidase_C1A"/>
</dbReference>
<dbReference type="InterPro" id="IPR000668">
    <property type="entry name" value="Peptidase_C1A_C"/>
</dbReference>
<dbReference type="PANTHER" id="PTHR12411">
    <property type="entry name" value="CYSTEINE PROTEASE FAMILY C1-RELATED"/>
    <property type="match status" value="1"/>
</dbReference>
<dbReference type="Pfam" id="PF00112">
    <property type="entry name" value="Peptidase_C1"/>
    <property type="match status" value="1"/>
</dbReference>
<dbReference type="PRINTS" id="PR00705">
    <property type="entry name" value="PAPAIN"/>
</dbReference>
<dbReference type="SMART" id="SM00645">
    <property type="entry name" value="Pept_C1"/>
    <property type="match status" value="1"/>
</dbReference>
<dbReference type="SUPFAM" id="SSF54001">
    <property type="entry name" value="Cysteine proteinases"/>
    <property type="match status" value="1"/>
</dbReference>
<dbReference type="PROSITE" id="PS00640">
    <property type="entry name" value="THIOL_PROTEASE_ASN"/>
    <property type="match status" value="1"/>
</dbReference>
<dbReference type="PROSITE" id="PS00139">
    <property type="entry name" value="THIOL_PROTEASE_CYS"/>
    <property type="match status" value="1"/>
</dbReference>
<dbReference type="PROSITE" id="PS00639">
    <property type="entry name" value="THIOL_PROTEASE_HIS"/>
    <property type="match status" value="1"/>
</dbReference>
<organism>
    <name type="scientific">Caenorhabditis elegans</name>
    <dbReference type="NCBI Taxonomy" id="6239"/>
    <lineage>
        <taxon>Eukaryota</taxon>
        <taxon>Metazoa</taxon>
        <taxon>Ecdysozoa</taxon>
        <taxon>Nematoda</taxon>
        <taxon>Chromadorea</taxon>
        <taxon>Rhabditida</taxon>
        <taxon>Rhabditina</taxon>
        <taxon>Rhabditomorpha</taxon>
        <taxon>Rhabditoidea</taxon>
        <taxon>Rhabditidae</taxon>
        <taxon>Peloderinae</taxon>
        <taxon>Caenorhabditis</taxon>
    </lineage>
</organism>
<proteinExistence type="evidence at protein level"/>
<sequence>MKTLLFLSCIVVAAYCACNDNLESVLDKYRNREIDSEAAELDGDDLIDYVNENQNLWTAKKQRRFSSVYGENDKAKWGLMGVNHVRLSVKGKQHLSKTKDLDLDIPESFDSRDNWPKCDSIKVIRDQSSCGSCWAFGAVEAMSDRICIASHGELQVTLSADDLLSCCKSCGFGCNGGDPLAAWRYWVKDGIVTGSNYTANNGCKPYPFPPCEHHSKKTHFDPCPHDLYPTPKCEKKCVSDYTDKTYSEDKFFGASAYGVKDDVEAIQKELMTHGPLEIAFEVYEDFLNYDGGVYVHTGGKLGGGHAVKLIGWGIDDGIPYWTVANSWNTDWGEDGFFRILRGVDECGIESGVVGGIPKLNSLTSRLHRHHRRHVYDDNY</sequence>
<evidence type="ECO:0000250" key="1"/>
<evidence type="ECO:0000255" key="2"/>
<evidence type="ECO:0000255" key="3">
    <source>
        <dbReference type="PROSITE-ProRule" id="PRU10088"/>
    </source>
</evidence>
<evidence type="ECO:0000255" key="4">
    <source>
        <dbReference type="PROSITE-ProRule" id="PRU10089"/>
    </source>
</evidence>
<evidence type="ECO:0000255" key="5">
    <source>
        <dbReference type="PROSITE-ProRule" id="PRU10090"/>
    </source>
</evidence>
<evidence type="ECO:0000269" key="6">
    <source>
    </source>
</evidence>
<evidence type="ECO:0000269" key="7">
    <source>
    </source>
</evidence>
<evidence type="ECO:0000269" key="8">
    <source>
    </source>
</evidence>
<comment type="similarity">
    <text evidence="3 4 5">Belongs to the peptidase C1 family.</text>
</comment>
<protein>
    <recommendedName>
        <fullName>Cathepsin B-like cysteine proteinase 6</fullName>
        <ecNumber>3.4.22.-</ecNumber>
    </recommendedName>
    <alternativeName>
        <fullName>Cysteine protease-related 6</fullName>
    </alternativeName>
</protein>
<name>CPR6_CAEEL</name>
<reference key="1">
    <citation type="journal article" date="1996" name="DNA Cell Biol.">
        <title>Isolation and characterization of four developmentally regulated cathepsin B-like cysteine protease genes from the nematode Caenorhabditis elegans.</title>
        <authorList>
            <person name="Larminie C.G.C."/>
            <person name="Johnstone I.L."/>
        </authorList>
    </citation>
    <scope>NUCLEOTIDE SEQUENCE [GENOMIC DNA / MRNA]</scope>
    <source>
        <strain>Bristol N2</strain>
    </source>
</reference>
<reference key="2">
    <citation type="journal article" date="1998" name="Science">
        <title>Genome sequence of the nematode C. elegans: a platform for investigating biology.</title>
        <authorList>
            <consortium name="The C. elegans sequencing consortium"/>
        </authorList>
    </citation>
    <scope>NUCLEOTIDE SEQUENCE [LARGE SCALE GENOMIC DNA]</scope>
    <source>
        <strain>Bristol N2</strain>
    </source>
</reference>
<reference key="3">
    <citation type="journal article" date="2003" name="Nat. Biotechnol.">
        <title>Lectin affinity capture, isotope-coded tagging and mass spectrometry to identify N-linked glycoproteins.</title>
        <authorList>
            <person name="Kaji H."/>
            <person name="Saito H."/>
            <person name="Yamauchi Y."/>
            <person name="Shinkawa T."/>
            <person name="Taoka M."/>
            <person name="Hirabayashi J."/>
            <person name="Kasai K."/>
            <person name="Takahashi N."/>
            <person name="Isobe T."/>
        </authorList>
    </citation>
    <scope>GLYCOSYLATION [LARGE SCALE ANALYSIS] AT ASN-196</scope>
    <scope>IDENTIFICATION BY MASS SPECTROMETRY</scope>
    <source>
        <strain>Bristol N2</strain>
    </source>
</reference>
<reference key="4">
    <citation type="journal article" date="2005" name="Glycobiology">
        <title>Identification of the hydrophobic glycoproteins of Caenorhabditis elegans.</title>
        <authorList>
            <person name="Fan X."/>
            <person name="She Y.-M."/>
            <person name="Bagshaw R.D."/>
            <person name="Callahan J.W."/>
            <person name="Schachter H."/>
            <person name="Mahuran D.J."/>
        </authorList>
    </citation>
    <scope>GLYCOSYLATION [LARGE SCALE ANALYSIS] AT ASN-196 AND ASN-201</scope>
    <scope>IDENTIFICATION BY MASS SPECTROMETRY</scope>
</reference>
<reference key="5">
    <citation type="journal article" date="2007" name="Mol. Cell. Proteomics">
        <title>Proteomics reveals N-linked glycoprotein diversity in Caenorhabditis elegans and suggests an atypical translocation mechanism for integral membrane proteins.</title>
        <authorList>
            <person name="Kaji H."/>
            <person name="Kamiie J."/>
            <person name="Kawakami H."/>
            <person name="Kido K."/>
            <person name="Yamauchi Y."/>
            <person name="Shinkawa T."/>
            <person name="Taoka M."/>
            <person name="Takahashi N."/>
            <person name="Isobe T."/>
        </authorList>
    </citation>
    <scope>GLYCOSYLATION [LARGE SCALE ANALYSIS] AT ASN-196 AND ASN-201</scope>
    <scope>IDENTIFICATION BY MASS SPECTROMETRY</scope>
    <source>
        <strain>Bristol N2</strain>
    </source>
</reference>
<gene>
    <name type="primary">cpr-6</name>
    <name type="ORF">C25B8.3</name>
</gene>
<keyword id="KW-1015">Disulfide bond</keyword>
<keyword id="KW-0325">Glycoprotein</keyword>
<keyword id="KW-0378">Hydrolase</keyword>
<keyword id="KW-0645">Protease</keyword>
<keyword id="KW-1185">Reference proteome</keyword>
<keyword id="KW-0732">Signal</keyword>
<keyword id="KW-0788">Thiol protease</keyword>
<keyword id="KW-0865">Zymogen</keyword>